<comment type="function">
    <text evidence="1">This protein binds to the 23S rRNA, and is important in its secondary structure. It is located near the subunit interface in the base of the L7/L12 stalk, and near the tRNA binding site of the peptidyltransferase center.</text>
</comment>
<comment type="subunit">
    <text evidence="1">Part of the 50S ribosomal subunit.</text>
</comment>
<comment type="similarity">
    <text evidence="1">Belongs to the universal ribosomal protein uL6 family.</text>
</comment>
<evidence type="ECO:0000255" key="1">
    <source>
        <dbReference type="HAMAP-Rule" id="MF_01365"/>
    </source>
</evidence>
<evidence type="ECO:0000305" key="2"/>
<reference key="1">
    <citation type="journal article" date="2006" name="J. Bacteriol.">
        <title>The genome sequence of the obligately chemolithoautotrophic, facultatively anaerobic bacterium Thiobacillus denitrificans.</title>
        <authorList>
            <person name="Beller H.R."/>
            <person name="Chain P.S."/>
            <person name="Letain T.E."/>
            <person name="Chakicherla A."/>
            <person name="Larimer F.W."/>
            <person name="Richardson P.M."/>
            <person name="Coleman M.A."/>
            <person name="Wood A.P."/>
            <person name="Kelly D.P."/>
        </authorList>
    </citation>
    <scope>NUCLEOTIDE SEQUENCE [LARGE SCALE GENOMIC DNA]</scope>
    <source>
        <strain>ATCC 25259 / T1</strain>
    </source>
</reference>
<protein>
    <recommendedName>
        <fullName evidence="1">Large ribosomal subunit protein uL6</fullName>
    </recommendedName>
    <alternativeName>
        <fullName evidence="2">50S ribosomal protein L6</fullName>
    </alternativeName>
</protein>
<gene>
    <name evidence="1" type="primary">rplF</name>
    <name type="ordered locus">Tbd_0420</name>
</gene>
<feature type="chain" id="PRO_0000265306" description="Large ribosomal subunit protein uL6">
    <location>
        <begin position="1"/>
        <end position="176"/>
    </location>
</feature>
<sequence>MSRVANNPITVPKGVEVTLGDGIAVKGPLGSMSQPMSSDVTVALNDGVLTFAPVGSSIQANAMAGTLRALVNNMVQGVSKGFERKLTLVGVGYRAQAQGDALNLSLGFSHPVVHKMPAGIKVETPTQTEIVIKGIDRQAVGQVAADVRAYRPPEPYKGKGVRYSDEVVIKKETKKK</sequence>
<organism>
    <name type="scientific">Thiobacillus denitrificans (strain ATCC 25259 / T1)</name>
    <dbReference type="NCBI Taxonomy" id="292415"/>
    <lineage>
        <taxon>Bacteria</taxon>
        <taxon>Pseudomonadati</taxon>
        <taxon>Pseudomonadota</taxon>
        <taxon>Betaproteobacteria</taxon>
        <taxon>Nitrosomonadales</taxon>
        <taxon>Thiobacillaceae</taxon>
        <taxon>Thiobacillus</taxon>
    </lineage>
</organism>
<dbReference type="EMBL" id="CP000116">
    <property type="protein sequence ID" value="AAZ96373.1"/>
    <property type="molecule type" value="Genomic_DNA"/>
</dbReference>
<dbReference type="RefSeq" id="WP_011310932.1">
    <property type="nucleotide sequence ID" value="NC_007404.1"/>
</dbReference>
<dbReference type="SMR" id="Q3SLN4"/>
<dbReference type="STRING" id="292415.Tbd_0420"/>
<dbReference type="KEGG" id="tbd:Tbd_0420"/>
<dbReference type="eggNOG" id="COG0097">
    <property type="taxonomic scope" value="Bacteria"/>
</dbReference>
<dbReference type="HOGENOM" id="CLU_065464_1_2_4"/>
<dbReference type="OrthoDB" id="9805007at2"/>
<dbReference type="Proteomes" id="UP000008291">
    <property type="component" value="Chromosome"/>
</dbReference>
<dbReference type="GO" id="GO:0022625">
    <property type="term" value="C:cytosolic large ribosomal subunit"/>
    <property type="evidence" value="ECO:0007669"/>
    <property type="project" value="TreeGrafter"/>
</dbReference>
<dbReference type="GO" id="GO:0019843">
    <property type="term" value="F:rRNA binding"/>
    <property type="evidence" value="ECO:0007669"/>
    <property type="project" value="UniProtKB-UniRule"/>
</dbReference>
<dbReference type="GO" id="GO:0003735">
    <property type="term" value="F:structural constituent of ribosome"/>
    <property type="evidence" value="ECO:0007669"/>
    <property type="project" value="InterPro"/>
</dbReference>
<dbReference type="GO" id="GO:0002181">
    <property type="term" value="P:cytoplasmic translation"/>
    <property type="evidence" value="ECO:0007669"/>
    <property type="project" value="TreeGrafter"/>
</dbReference>
<dbReference type="FunFam" id="3.90.930.12:FF:000001">
    <property type="entry name" value="50S ribosomal protein L6"/>
    <property type="match status" value="1"/>
</dbReference>
<dbReference type="Gene3D" id="3.90.930.12">
    <property type="entry name" value="Ribosomal protein L6, alpha-beta domain"/>
    <property type="match status" value="2"/>
</dbReference>
<dbReference type="HAMAP" id="MF_01365_B">
    <property type="entry name" value="Ribosomal_uL6_B"/>
    <property type="match status" value="1"/>
</dbReference>
<dbReference type="InterPro" id="IPR000702">
    <property type="entry name" value="Ribosomal_uL6-like"/>
</dbReference>
<dbReference type="InterPro" id="IPR036789">
    <property type="entry name" value="Ribosomal_uL6-like_a/b-dom_sf"/>
</dbReference>
<dbReference type="InterPro" id="IPR020040">
    <property type="entry name" value="Ribosomal_uL6_a/b-dom"/>
</dbReference>
<dbReference type="InterPro" id="IPR019906">
    <property type="entry name" value="Ribosomal_uL6_bac-type"/>
</dbReference>
<dbReference type="InterPro" id="IPR002358">
    <property type="entry name" value="Ribosomal_uL6_CS"/>
</dbReference>
<dbReference type="NCBIfam" id="TIGR03654">
    <property type="entry name" value="L6_bact"/>
    <property type="match status" value="1"/>
</dbReference>
<dbReference type="PANTHER" id="PTHR11655">
    <property type="entry name" value="60S/50S RIBOSOMAL PROTEIN L6/L9"/>
    <property type="match status" value="1"/>
</dbReference>
<dbReference type="PANTHER" id="PTHR11655:SF14">
    <property type="entry name" value="LARGE RIBOSOMAL SUBUNIT PROTEIN UL6M"/>
    <property type="match status" value="1"/>
</dbReference>
<dbReference type="Pfam" id="PF00347">
    <property type="entry name" value="Ribosomal_L6"/>
    <property type="match status" value="2"/>
</dbReference>
<dbReference type="PIRSF" id="PIRSF002162">
    <property type="entry name" value="Ribosomal_L6"/>
    <property type="match status" value="1"/>
</dbReference>
<dbReference type="PRINTS" id="PR00059">
    <property type="entry name" value="RIBOSOMALL6"/>
</dbReference>
<dbReference type="SUPFAM" id="SSF56053">
    <property type="entry name" value="Ribosomal protein L6"/>
    <property type="match status" value="2"/>
</dbReference>
<dbReference type="PROSITE" id="PS00525">
    <property type="entry name" value="RIBOSOMAL_L6_1"/>
    <property type="match status" value="1"/>
</dbReference>
<name>RL6_THIDA</name>
<keyword id="KW-1185">Reference proteome</keyword>
<keyword id="KW-0687">Ribonucleoprotein</keyword>
<keyword id="KW-0689">Ribosomal protein</keyword>
<keyword id="KW-0694">RNA-binding</keyword>
<keyword id="KW-0699">rRNA-binding</keyword>
<accession>Q3SLN4</accession>
<proteinExistence type="inferred from homology"/>